<feature type="chain" id="PRO_1000212524" description="UPF0260 protein GbCGDNIH1_2046">
    <location>
        <begin position="1"/>
        <end position="166"/>
    </location>
</feature>
<feature type="region of interest" description="Disordered" evidence="2">
    <location>
        <begin position="147"/>
        <end position="166"/>
    </location>
</feature>
<feature type="compositionally biased region" description="Basic and acidic residues" evidence="2">
    <location>
        <begin position="154"/>
        <end position="166"/>
    </location>
</feature>
<name>Y2046_GRABC</name>
<protein>
    <recommendedName>
        <fullName evidence="1">UPF0260 protein GbCGDNIH1_2046</fullName>
    </recommendedName>
</protein>
<evidence type="ECO:0000255" key="1">
    <source>
        <dbReference type="HAMAP-Rule" id="MF_00676"/>
    </source>
</evidence>
<evidence type="ECO:0000256" key="2">
    <source>
        <dbReference type="SAM" id="MobiDB-lite"/>
    </source>
</evidence>
<sequence length="166" mass="18940">MTEALPFWKTKHLTELTREEWESLCDGCGRCCLHKLRDEETEELAFTNVSCRLLDTQSCRCTSYATRFRKVPDCISLTPALVAEIDWLPPSCAYRIVLNGKDLPWWHPLVSGDPETVHQAGISVRGRAIDEREAGPLEDYIVSWPGRFPRPRRPRQEPAGKTADES</sequence>
<accession>Q0BQF8</accession>
<comment type="similarity">
    <text evidence="1">Belongs to the UPF0260 family.</text>
</comment>
<organism>
    <name type="scientific">Granulibacter bethesdensis (strain ATCC BAA-1260 / CGDNIH1)</name>
    <dbReference type="NCBI Taxonomy" id="391165"/>
    <lineage>
        <taxon>Bacteria</taxon>
        <taxon>Pseudomonadati</taxon>
        <taxon>Pseudomonadota</taxon>
        <taxon>Alphaproteobacteria</taxon>
        <taxon>Acetobacterales</taxon>
        <taxon>Acetobacteraceae</taxon>
        <taxon>Granulibacter</taxon>
    </lineage>
</organism>
<reference key="1">
    <citation type="journal article" date="2007" name="J. Bacteriol.">
        <title>Genome sequence analysis of the emerging human pathogenic acetic acid bacterium Granulibacter bethesdensis.</title>
        <authorList>
            <person name="Greenberg D.E."/>
            <person name="Porcella S.F."/>
            <person name="Zelazny A.M."/>
            <person name="Virtaneva K."/>
            <person name="Sturdevant D.E."/>
            <person name="Kupko J.J. III"/>
            <person name="Barbian K.D."/>
            <person name="Babar A."/>
            <person name="Dorward D.W."/>
            <person name="Holland S.M."/>
        </authorList>
    </citation>
    <scope>NUCLEOTIDE SEQUENCE [LARGE SCALE GENOMIC DNA]</scope>
    <source>
        <strain>ATCC BAA-1260 / CGDNIH1</strain>
    </source>
</reference>
<proteinExistence type="inferred from homology"/>
<keyword id="KW-1185">Reference proteome</keyword>
<dbReference type="EMBL" id="CP000394">
    <property type="protein sequence ID" value="ABI62944.1"/>
    <property type="molecule type" value="Genomic_DNA"/>
</dbReference>
<dbReference type="RefSeq" id="WP_011632746.1">
    <property type="nucleotide sequence ID" value="NC_008343.2"/>
</dbReference>
<dbReference type="STRING" id="391165.GbCGDNIH1_2046"/>
<dbReference type="GeneID" id="69746234"/>
<dbReference type="KEGG" id="gbe:GbCGDNIH1_2046"/>
<dbReference type="eggNOG" id="COG2983">
    <property type="taxonomic scope" value="Bacteria"/>
</dbReference>
<dbReference type="HOGENOM" id="CLU_109769_0_1_5"/>
<dbReference type="OrthoDB" id="9786855at2"/>
<dbReference type="Proteomes" id="UP000001963">
    <property type="component" value="Chromosome"/>
</dbReference>
<dbReference type="HAMAP" id="MF_00676">
    <property type="entry name" value="UPF0260"/>
    <property type="match status" value="1"/>
</dbReference>
<dbReference type="InterPro" id="IPR005358">
    <property type="entry name" value="Puta_zinc/iron-chelating_dom"/>
</dbReference>
<dbReference type="InterPro" id="IPR008228">
    <property type="entry name" value="UCP006173"/>
</dbReference>
<dbReference type="NCBIfam" id="NF003501">
    <property type="entry name" value="PRK05170.1-5"/>
    <property type="match status" value="1"/>
</dbReference>
<dbReference type="NCBIfam" id="NF003507">
    <property type="entry name" value="PRK05170.2-5"/>
    <property type="match status" value="1"/>
</dbReference>
<dbReference type="PANTHER" id="PTHR37421">
    <property type="entry name" value="UPF0260 PROTEIN YCGN"/>
    <property type="match status" value="1"/>
</dbReference>
<dbReference type="PANTHER" id="PTHR37421:SF1">
    <property type="entry name" value="UPF0260 PROTEIN YCGN"/>
    <property type="match status" value="1"/>
</dbReference>
<dbReference type="Pfam" id="PF03692">
    <property type="entry name" value="CxxCxxCC"/>
    <property type="match status" value="1"/>
</dbReference>
<dbReference type="PIRSF" id="PIRSF006173">
    <property type="entry name" value="UCP006173"/>
    <property type="match status" value="1"/>
</dbReference>
<gene>
    <name type="ordered locus">GbCGDNIH1_2046</name>
</gene>